<reference key="1">
    <citation type="journal article" date="1993" name="Virus Res.">
        <title>Nucleotide sequence analysis of variola virus HindIII M, L, I genome fragments.</title>
        <authorList>
            <person name="Shchelkunov S.N."/>
            <person name="Blinov V.M."/>
            <person name="Totmenin A.V."/>
            <person name="Marennikova S.S."/>
            <person name="Kolykhalov A.A."/>
            <person name="Frolov I.V."/>
            <person name="Chizhikov V.E."/>
            <person name="Gytorov V.V."/>
            <person name="Gashikov P.V."/>
            <person name="Belanov E.F."/>
            <person name="Belavin P.A."/>
            <person name="Resenchuk S.M."/>
            <person name="Andzhaparidze O.G."/>
            <person name="Sandakhchiev L.S."/>
        </authorList>
    </citation>
    <scope>NUCLEOTIDE SEQUENCE [GENOMIC DNA]</scope>
</reference>
<reference key="2">
    <citation type="journal article" date="1993" name="FEBS Lett.">
        <title>Genes of variola and vaccinia viruses necessary to overcome the host protective mechanisms.</title>
        <authorList>
            <person name="Shchelkunov S.N."/>
            <person name="Blinov V.M."/>
            <person name="Sandakhchiev L.S."/>
        </authorList>
    </citation>
    <scope>NUCLEOTIDE SEQUENCE [LARGE SCALE GENOMIC DNA]</scope>
</reference>
<organismHost>
    <name type="scientific">Homo sapiens</name>
    <name type="common">Human</name>
    <dbReference type="NCBI Taxonomy" id="9606"/>
</organismHost>
<comment type="function">
    <text evidence="1">Contributes to the formation of crescents and immature virions (IV). Interacts with phosphatidylinositol-3-phosphate (PI3P) and phosphatidylinositol-4-phosphate (PI4P) lipids in order to form virion membranes. Mechanistically, mediates proper formation of OPG125-hexamers, and hence the honey comb lattice and spherical immature virus.</text>
</comment>
<comment type="subcellular location">
    <subcellularLocation>
        <location evidence="1">Host membrane</location>
        <topology evidence="1">Single-pass membrane protein</topology>
    </subcellularLocation>
    <subcellularLocation>
        <location evidence="1">Host cytoplasm</location>
    </subcellularLocation>
    <text evidence="1">Probably transitorily part of the membrane of crescents during immature virions formation. Not incorporated into virions. Probably synthesized, but not retained in viral factories.</text>
</comment>
<comment type="induction">
    <text>Expressed in the late phase of the viral replicative cycle.</text>
</comment>
<comment type="similarity">
    <text evidence="3">Belongs to the orthopoxvirus OPG112 family.</text>
</comment>
<accession>P0DON7</accession>
<accession>P33063</accession>
<sequence>MEMDKRMKSLAMTAFFGELTTLDIMALIMSIFKRHPNNTIFSVDKDGQFMIDFEYDTYKASQYLDLPLTPISGDECKTHASSIAKQLACVDIIKEDISEYIKTTPRLKRFIKKYRNRSDTRISQDTEKLKIALAKGIDYEYIKDAC</sequence>
<gene>
    <name type="primary">OPG112</name>
    <name type="ORF">H7R</name>
</gene>
<keyword id="KW-1035">Host cytoplasm</keyword>
<keyword id="KW-1043">Host membrane</keyword>
<keyword id="KW-0426">Late protein</keyword>
<keyword id="KW-0472">Membrane</keyword>
<keyword id="KW-1185">Reference proteome</keyword>
<keyword id="KW-0812">Transmembrane</keyword>
<keyword id="KW-1133">Transmembrane helix</keyword>
<proteinExistence type="evidence at transcript level"/>
<dbReference type="EMBL" id="X67119">
    <property type="protein sequence ID" value="CAA47589.1"/>
    <property type="molecule type" value="Genomic_DNA"/>
</dbReference>
<dbReference type="EMBL" id="S55844">
    <property type="protein sequence ID" value="AAB24686.1"/>
    <property type="molecule type" value="Genomic_DNA"/>
</dbReference>
<dbReference type="EMBL" id="X69198">
    <property type="protein sequence ID" value="CAA49031.1"/>
    <property type="molecule type" value="Genomic_DNA"/>
</dbReference>
<dbReference type="PIR" id="H72161">
    <property type="entry name" value="H72161"/>
</dbReference>
<dbReference type="PIR" id="S33104">
    <property type="entry name" value="S33104"/>
</dbReference>
<dbReference type="SMR" id="P0DON7"/>
<dbReference type="KEGG" id="vg:1486445"/>
<dbReference type="Proteomes" id="UP000002060">
    <property type="component" value="Segment"/>
</dbReference>
<dbReference type="GO" id="GO:0030430">
    <property type="term" value="C:host cell cytoplasm"/>
    <property type="evidence" value="ECO:0007669"/>
    <property type="project" value="UniProtKB-SubCell"/>
</dbReference>
<dbReference type="GO" id="GO:0033644">
    <property type="term" value="C:host cell membrane"/>
    <property type="evidence" value="ECO:0007669"/>
    <property type="project" value="UniProtKB-SubCell"/>
</dbReference>
<dbReference type="GO" id="GO:0016020">
    <property type="term" value="C:membrane"/>
    <property type="evidence" value="ECO:0007669"/>
    <property type="project" value="UniProtKB-KW"/>
</dbReference>
<dbReference type="InterPro" id="IPR006872">
    <property type="entry name" value="Poxvirus_H7"/>
</dbReference>
<dbReference type="Pfam" id="PF04787">
    <property type="entry name" value="Pox_H7"/>
    <property type="match status" value="1"/>
</dbReference>
<feature type="chain" id="PRO_0000099554" description="Late protein OPG112">
    <location>
        <begin position="1"/>
        <end position="146"/>
    </location>
</feature>
<feature type="transmembrane region" description="Helical" evidence="2">
    <location>
        <begin position="10"/>
        <end position="32"/>
    </location>
</feature>
<protein>
    <recommendedName>
        <fullName>Late protein OPG112</fullName>
    </recommendedName>
</protein>
<name>PG112_VAR67</name>
<evidence type="ECO:0000250" key="1">
    <source>
        <dbReference type="UniProtKB" id="P08586"/>
    </source>
</evidence>
<evidence type="ECO:0000255" key="2"/>
<evidence type="ECO:0000305" key="3"/>
<organism>
    <name type="scientific">Variola virus (isolate Human/India/Ind3/1967)</name>
    <name type="common">VARV</name>
    <name type="synonym">Smallpox virus</name>
    <dbReference type="NCBI Taxonomy" id="587200"/>
    <lineage>
        <taxon>Viruses</taxon>
        <taxon>Varidnaviria</taxon>
        <taxon>Bamfordvirae</taxon>
        <taxon>Nucleocytoviricota</taxon>
        <taxon>Pokkesviricetes</taxon>
        <taxon>Chitovirales</taxon>
        <taxon>Poxviridae</taxon>
        <taxon>Chordopoxvirinae</taxon>
        <taxon>Orthopoxvirus</taxon>
        <taxon>Variola virus</taxon>
    </lineage>
</organism>